<protein>
    <recommendedName>
        <fullName>C-X-C chemokine receptor type 1</fullName>
        <shortName>CXC-R1</shortName>
        <shortName>CXCR-1</shortName>
    </recommendedName>
    <alternativeName>
        <fullName>High affinity interleukin-8 receptor A</fullName>
        <shortName>IL-8R A</shortName>
    </alternativeName>
    <alternativeName>
        <fullName>IL-8 receptor type 1</fullName>
    </alternativeName>
    <cdAntigenName>CD181</cdAntigenName>
</protein>
<keyword id="KW-1003">Cell membrane</keyword>
<keyword id="KW-0145">Chemotaxis</keyword>
<keyword id="KW-1015">Disulfide bond</keyword>
<keyword id="KW-0297">G-protein coupled receptor</keyword>
<keyword id="KW-0325">Glycoprotein</keyword>
<keyword id="KW-0472">Membrane</keyword>
<keyword id="KW-0675">Receptor</keyword>
<keyword id="KW-1185">Reference proteome</keyword>
<keyword id="KW-0807">Transducer</keyword>
<keyword id="KW-0812">Transmembrane</keyword>
<keyword id="KW-1133">Transmembrane helix</keyword>
<sequence length="350" mass="39818">MSNITDPQMWDFDDLNFTGMPPTDEGYSPCRLETETLNKYVVIITYALVFLLSLLGNSLVMLVILYSRVGRSVTDVYLLNLALADLLFALTLPIWAASKVNGWIFGTFLCKVVSLLKEVNFYSGILLLACISVDRYLAIVHATRTLTQKRHLVKFVCLGCWGLSMNLSLPFFLFRQAYHPNNSSPVCYEVLGNDTAKWRMVLRILPHTFGFIVPLFVMLFCYGFTLRTLFKAHMGQKHRAMRVIFAVVLIFLLCWLPYNLVLLADTLMRTQVIQESCERRNNIGRALDATEILGFLHSCLNPIIYAFIGQNFRHGFLKILAMHGLVSKEFLARHRVTSYTSSSVNVSSNL</sequence>
<comment type="function">
    <text evidence="1">Receptor to interleukin-8, which is a powerful neutrophils chemotactic factor. Binding of IL-8 to the receptor causes activation of neutrophils. This response is mediated via a G-protein that activates a phosphatidylinositol-calcium second messenger system.</text>
</comment>
<comment type="subunit">
    <text evidence="1">Interacts with IL8. Interacts with GNAI2.</text>
</comment>
<comment type="subcellular location">
    <subcellularLocation>
        <location>Cell membrane</location>
        <topology>Multi-pass membrane protein</topology>
    </subcellularLocation>
</comment>
<comment type="similarity">
    <text evidence="3">Belongs to the G-protein coupled receptor 1 family.</text>
</comment>
<name>CXCR1_PANTR</name>
<organism>
    <name type="scientific">Pan troglodytes</name>
    <name type="common">Chimpanzee</name>
    <dbReference type="NCBI Taxonomy" id="9598"/>
    <lineage>
        <taxon>Eukaryota</taxon>
        <taxon>Metazoa</taxon>
        <taxon>Chordata</taxon>
        <taxon>Craniata</taxon>
        <taxon>Vertebrata</taxon>
        <taxon>Euteleostomi</taxon>
        <taxon>Mammalia</taxon>
        <taxon>Eutheria</taxon>
        <taxon>Euarchontoglires</taxon>
        <taxon>Primates</taxon>
        <taxon>Haplorrhini</taxon>
        <taxon>Catarrhini</taxon>
        <taxon>Hominidae</taxon>
        <taxon>Pan</taxon>
    </lineage>
</organism>
<dbReference type="EMBL" id="X91109">
    <property type="protein sequence ID" value="CAB37850.1"/>
    <property type="molecule type" value="Genomic_DNA"/>
</dbReference>
<dbReference type="EMBL" id="AY916760">
    <property type="protein sequence ID" value="AAY21510.1"/>
    <property type="molecule type" value="Genomic_DNA"/>
</dbReference>
<dbReference type="EMBL" id="AY916761">
    <property type="protein sequence ID" value="AAY21511.1"/>
    <property type="molecule type" value="Genomic_DNA"/>
</dbReference>
<dbReference type="RefSeq" id="NP_001035537.1">
    <property type="nucleotide sequence ID" value="NM_001040447.1"/>
</dbReference>
<dbReference type="BMRB" id="P55920"/>
<dbReference type="SMR" id="P55920"/>
<dbReference type="FunCoup" id="P55920">
    <property type="interactions" value="1027"/>
</dbReference>
<dbReference type="STRING" id="9598.ENSPTRP00000022066"/>
<dbReference type="GlyCosmos" id="P55920">
    <property type="glycosylation" value="2 sites, No reported glycans"/>
</dbReference>
<dbReference type="PaxDb" id="9598-ENSPTRP00000022066"/>
<dbReference type="GeneID" id="470645"/>
<dbReference type="CTD" id="3577"/>
<dbReference type="eggNOG" id="KOG3656">
    <property type="taxonomic scope" value="Eukaryota"/>
</dbReference>
<dbReference type="InParanoid" id="P55920"/>
<dbReference type="Proteomes" id="UP000002277">
    <property type="component" value="Unplaced"/>
</dbReference>
<dbReference type="GO" id="GO:0009897">
    <property type="term" value="C:external side of plasma membrane"/>
    <property type="evidence" value="ECO:0000318"/>
    <property type="project" value="GO_Central"/>
</dbReference>
<dbReference type="GO" id="GO:0019957">
    <property type="term" value="F:C-C chemokine binding"/>
    <property type="evidence" value="ECO:0000318"/>
    <property type="project" value="GO_Central"/>
</dbReference>
<dbReference type="GO" id="GO:0016493">
    <property type="term" value="F:C-C chemokine receptor activity"/>
    <property type="evidence" value="ECO:0000318"/>
    <property type="project" value="GO_Central"/>
</dbReference>
<dbReference type="GO" id="GO:0016494">
    <property type="term" value="F:C-X-C chemokine receptor activity"/>
    <property type="evidence" value="ECO:0007669"/>
    <property type="project" value="InterPro"/>
</dbReference>
<dbReference type="GO" id="GO:0019959">
    <property type="term" value="F:interleukin-8 binding"/>
    <property type="evidence" value="ECO:0007669"/>
    <property type="project" value="InterPro"/>
</dbReference>
<dbReference type="GO" id="GO:0019722">
    <property type="term" value="P:calcium-mediated signaling"/>
    <property type="evidence" value="ECO:0000318"/>
    <property type="project" value="GO_Central"/>
</dbReference>
<dbReference type="GO" id="GO:0006955">
    <property type="term" value="P:immune response"/>
    <property type="evidence" value="ECO:0000318"/>
    <property type="project" value="GO_Central"/>
</dbReference>
<dbReference type="GO" id="GO:0030593">
    <property type="term" value="P:neutrophil chemotaxis"/>
    <property type="evidence" value="ECO:0000318"/>
    <property type="project" value="GO_Central"/>
</dbReference>
<dbReference type="GO" id="GO:0007204">
    <property type="term" value="P:positive regulation of cytosolic calcium ion concentration"/>
    <property type="evidence" value="ECO:0000318"/>
    <property type="project" value="GO_Central"/>
</dbReference>
<dbReference type="CDD" id="cd15178">
    <property type="entry name" value="7tmA_CXCR1_2"/>
    <property type="match status" value="1"/>
</dbReference>
<dbReference type="FunFam" id="1.20.1070.10:FF:000157">
    <property type="entry name" value="C-X-C chemokine receptor type 2"/>
    <property type="match status" value="1"/>
</dbReference>
<dbReference type="Gene3D" id="1.20.1070.10">
    <property type="entry name" value="Rhodopsin 7-helix transmembrane proteins"/>
    <property type="match status" value="1"/>
</dbReference>
<dbReference type="InterPro" id="IPR050119">
    <property type="entry name" value="CCR1-9-like"/>
</dbReference>
<dbReference type="InterPro" id="IPR001355">
    <property type="entry name" value="Chemokine_CXCR1"/>
</dbReference>
<dbReference type="InterPro" id="IPR000174">
    <property type="entry name" value="Chemokine_CXCR_1/2"/>
</dbReference>
<dbReference type="InterPro" id="IPR000276">
    <property type="entry name" value="GPCR_Rhodpsn"/>
</dbReference>
<dbReference type="InterPro" id="IPR017452">
    <property type="entry name" value="GPCR_Rhodpsn_7TM"/>
</dbReference>
<dbReference type="PANTHER" id="PTHR10489:SF916">
    <property type="entry name" value="C-X-C CHEMOKINE RECEPTOR TYPE 1"/>
    <property type="match status" value="1"/>
</dbReference>
<dbReference type="PANTHER" id="PTHR10489">
    <property type="entry name" value="CELL ADHESION MOLECULE"/>
    <property type="match status" value="1"/>
</dbReference>
<dbReference type="Pfam" id="PF00001">
    <property type="entry name" value="7tm_1"/>
    <property type="match status" value="1"/>
</dbReference>
<dbReference type="PRINTS" id="PR00237">
    <property type="entry name" value="GPCRRHODOPSN"/>
</dbReference>
<dbReference type="PRINTS" id="PR00427">
    <property type="entry name" value="INTRLEUKIN8R"/>
</dbReference>
<dbReference type="PRINTS" id="PR00572">
    <property type="entry name" value="INTRLEUKN8AR"/>
</dbReference>
<dbReference type="SUPFAM" id="SSF81321">
    <property type="entry name" value="Family A G protein-coupled receptor-like"/>
    <property type="match status" value="1"/>
</dbReference>
<dbReference type="PROSITE" id="PS00237">
    <property type="entry name" value="G_PROTEIN_RECEP_F1_1"/>
    <property type="match status" value="1"/>
</dbReference>
<dbReference type="PROSITE" id="PS50262">
    <property type="entry name" value="G_PROTEIN_RECEP_F1_2"/>
    <property type="match status" value="1"/>
</dbReference>
<accession>P55920</accession>
<accession>Q2YEG9</accession>
<accession>Q2YEH0</accession>
<proteinExistence type="inferred from homology"/>
<evidence type="ECO:0000250" key="1">
    <source>
        <dbReference type="UniProtKB" id="P25024"/>
    </source>
</evidence>
<evidence type="ECO:0000255" key="2"/>
<evidence type="ECO:0000255" key="3">
    <source>
        <dbReference type="PROSITE-ProRule" id="PRU00521"/>
    </source>
</evidence>
<evidence type="ECO:0000305" key="4"/>
<gene>
    <name type="primary">CXCR1</name>
    <name type="synonym">IL8RA</name>
</gene>
<feature type="chain" id="PRO_0000069331" description="C-X-C chemokine receptor type 1">
    <location>
        <begin position="1"/>
        <end position="350"/>
    </location>
</feature>
<feature type="topological domain" description="Extracellular" evidence="2">
    <location>
        <begin position="1"/>
        <end position="39"/>
    </location>
</feature>
<feature type="transmembrane region" description="Helical; Name=1" evidence="2">
    <location>
        <begin position="40"/>
        <end position="66"/>
    </location>
</feature>
<feature type="topological domain" description="Cytoplasmic" evidence="2">
    <location>
        <begin position="67"/>
        <end position="75"/>
    </location>
</feature>
<feature type="transmembrane region" description="Helical; Name=2" evidence="2">
    <location>
        <begin position="76"/>
        <end position="96"/>
    </location>
</feature>
<feature type="topological domain" description="Extracellular" evidence="2">
    <location>
        <begin position="97"/>
        <end position="111"/>
    </location>
</feature>
<feature type="transmembrane region" description="Helical; Name=3" evidence="2">
    <location>
        <begin position="112"/>
        <end position="133"/>
    </location>
</feature>
<feature type="topological domain" description="Cytoplasmic" evidence="2">
    <location>
        <begin position="134"/>
        <end position="154"/>
    </location>
</feature>
<feature type="transmembrane region" description="Helical; Name=4" evidence="2">
    <location>
        <begin position="155"/>
        <end position="174"/>
    </location>
</feature>
<feature type="topological domain" description="Extracellular" evidence="2">
    <location>
        <begin position="175"/>
        <end position="199"/>
    </location>
</feature>
<feature type="transmembrane region" description="Helical; Name=5" evidence="2">
    <location>
        <begin position="200"/>
        <end position="220"/>
    </location>
</feature>
<feature type="topological domain" description="Cytoplasmic" evidence="2">
    <location>
        <begin position="221"/>
        <end position="242"/>
    </location>
</feature>
<feature type="transmembrane region" description="Helical; Name=6" evidence="2">
    <location>
        <begin position="243"/>
        <end position="264"/>
    </location>
</feature>
<feature type="topological domain" description="Extracellular" evidence="2">
    <location>
        <begin position="265"/>
        <end position="285"/>
    </location>
</feature>
<feature type="transmembrane region" description="Helical; Name=7" evidence="2">
    <location>
        <begin position="286"/>
        <end position="308"/>
    </location>
</feature>
<feature type="topological domain" description="Cytoplasmic" evidence="2">
    <location>
        <begin position="309"/>
        <end position="350"/>
    </location>
</feature>
<feature type="glycosylation site" description="N-linked (GlcNAc...) asparagine" evidence="2">
    <location>
        <position position="3"/>
    </location>
</feature>
<feature type="glycosylation site" description="N-linked (GlcNAc...) asparagine" evidence="2">
    <location>
        <position position="16"/>
    </location>
</feature>
<feature type="disulfide bond" evidence="3">
    <location>
        <begin position="110"/>
        <end position="187"/>
    </location>
</feature>
<feature type="sequence conflict" description="In Ref. 2; AAY21510/AAY21511." evidence="4" ref="2">
    <original>T</original>
    <variation>I</variation>
    <location>
        <position position="5"/>
    </location>
</feature>
<feature type="sequence conflict" description="In Ref. 2; AAY21510/AAY21511." evidence="4" ref="2">
    <original>F</original>
    <variation>Y</variation>
    <location>
        <position position="12"/>
    </location>
</feature>
<feature type="sequence conflict" description="In Ref. 2; AAY21510/AAY21511." evidence="4" ref="2">
    <original>V</original>
    <variation>A</variation>
    <location>
        <position position="49"/>
    </location>
</feature>
<feature type="sequence conflict" description="In Ref. 2; AAY21510/AAY21511." evidence="4" ref="2">
    <original>V</original>
    <variation>I</variation>
    <location>
        <position position="73"/>
    </location>
</feature>
<feature type="sequence conflict" description="In Ref. 2; AAY21510/AAY21511." evidence="4" ref="2">
    <original>N</original>
    <variation>T</variation>
    <location>
        <position position="101"/>
    </location>
</feature>
<feature type="sequence conflict" description="In Ref. 2; AAY21510/AAY21511." evidence="4" ref="2">
    <original>F</original>
    <variation>L</variation>
    <location>
        <position position="108"/>
    </location>
</feature>
<feature type="sequence conflict" description="In Ref. 2; AAY21510/AAY21511." evidence="4" ref="2">
    <original>N</original>
    <variation>I</variation>
    <location>
        <position position="166"/>
    </location>
</feature>
<feature type="sequence conflict" description="In Ref. 2; AAY21510." evidence="4" ref="2">
    <original>R</original>
    <variation>H</variation>
    <location>
        <position position="227"/>
    </location>
</feature>
<feature type="sequence conflict" description="In Ref. 2; AAY21510." evidence="4" ref="2">
    <original>V</original>
    <variation>I</variation>
    <location>
        <position position="243"/>
    </location>
</feature>
<reference key="1">
    <citation type="journal article" date="1996" name="Immunogenetics">
        <title>Characterization of interleukin-8 receptors in non-human primates.</title>
        <authorList>
            <person name="Alvarez V."/>
            <person name="Coto E."/>
            <person name="Setien F."/>
            <person name="Gonzalez S."/>
            <person name="Gonzalez-Roces S."/>
            <person name="Lopez-Larrea C."/>
        </authorList>
    </citation>
    <scope>NUCLEOTIDE SEQUENCE [GENOMIC DNA]</scope>
</reference>
<reference key="2">
    <citation type="journal article" date="2005" name="J. Mol. Evol.">
        <title>Molecular evolution of CXCR1, a G protein-coupled receptor involved in signal transduction of neutrophils.</title>
        <authorList>
            <person name="Liu Y."/>
            <person name="Yang S."/>
            <person name="Lin A.A."/>
            <person name="Cavalli-Sforza L.L."/>
            <person name="Su B."/>
        </authorList>
    </citation>
    <scope>NUCLEOTIDE SEQUENCE [GENOMIC DNA]</scope>
</reference>